<sequence length="416" mass="46877">MSQIAILSVNHQLAPVEVREKVAFTPDKLTQALSDLHGIYGIYACIILSTCNRVEIYVNSDNENPKEVLSNYLAKIHNITRDRINPYLNYFEDNEALTHVCNVATGLDSLVLGEPQILGQLKNAYHMAKEAKTLNKLLEKLFQHAFSTAKKVRTDTQIGVSPVSIAYCSVKLSEKIFECLSEQTVLLIGAGEMIELCAQYLNKKKVSNMIIANRTIENAQKIANLYQAQSIGLKQFSSVIHKADIIISSTAASVPIIGKGLIESALKKRKHKPIFMLDIAIPRDIEPEVGQLDDIYLYTIDDLEQVINDNIGNREKEKNLAQEIIIKQNQVFNQWLKVLPNEQLVRSYRSNANLIKNKLLEKAIKQIKHSGDYENIIRKFADQLTNKLLHLPSKNIKQTSTDNLSQCEGCIPNIKK</sequence>
<feature type="chain" id="PRO_0000335080" description="Glutamyl-tRNA reductase">
    <location>
        <begin position="1"/>
        <end position="416"/>
    </location>
</feature>
<feature type="active site" description="Nucleophile" evidence="1">
    <location>
        <position position="51"/>
    </location>
</feature>
<feature type="binding site" evidence="1">
    <location>
        <begin position="50"/>
        <end position="53"/>
    </location>
    <ligand>
        <name>substrate</name>
    </ligand>
</feature>
<feature type="binding site" evidence="1">
    <location>
        <position position="109"/>
    </location>
    <ligand>
        <name>substrate</name>
    </ligand>
</feature>
<feature type="binding site" evidence="1">
    <location>
        <begin position="114"/>
        <end position="116"/>
    </location>
    <ligand>
        <name>substrate</name>
    </ligand>
</feature>
<feature type="binding site" evidence="1">
    <location>
        <position position="120"/>
    </location>
    <ligand>
        <name>substrate</name>
    </ligand>
</feature>
<feature type="binding site" evidence="1">
    <location>
        <begin position="189"/>
        <end position="194"/>
    </location>
    <ligand>
        <name>NADP(+)</name>
        <dbReference type="ChEBI" id="CHEBI:58349"/>
    </ligand>
</feature>
<feature type="site" description="Important for activity" evidence="1">
    <location>
        <position position="99"/>
    </location>
</feature>
<dbReference type="EC" id="1.2.1.70" evidence="1"/>
<dbReference type="EMBL" id="AP009247">
    <property type="protein sequence ID" value="BAF61787.1"/>
    <property type="molecule type" value="Genomic_DNA"/>
</dbReference>
<dbReference type="RefSeq" id="WP_011930057.1">
    <property type="nucleotide sequence ID" value="NC_009465.1"/>
</dbReference>
<dbReference type="SMR" id="A5CW97"/>
<dbReference type="STRING" id="412965.COSY_0675"/>
<dbReference type="KEGG" id="vok:COSY_0675"/>
<dbReference type="eggNOG" id="COG0373">
    <property type="taxonomic scope" value="Bacteria"/>
</dbReference>
<dbReference type="HOGENOM" id="CLU_035113_2_2_6"/>
<dbReference type="OrthoDB" id="110209at2"/>
<dbReference type="UniPathway" id="UPA00251">
    <property type="reaction ID" value="UER00316"/>
</dbReference>
<dbReference type="Proteomes" id="UP000000247">
    <property type="component" value="Chromosome"/>
</dbReference>
<dbReference type="GO" id="GO:0008883">
    <property type="term" value="F:glutamyl-tRNA reductase activity"/>
    <property type="evidence" value="ECO:0007669"/>
    <property type="project" value="UniProtKB-UniRule"/>
</dbReference>
<dbReference type="GO" id="GO:0050661">
    <property type="term" value="F:NADP binding"/>
    <property type="evidence" value="ECO:0007669"/>
    <property type="project" value="InterPro"/>
</dbReference>
<dbReference type="GO" id="GO:0019353">
    <property type="term" value="P:protoporphyrinogen IX biosynthetic process from glutamate"/>
    <property type="evidence" value="ECO:0007669"/>
    <property type="project" value="TreeGrafter"/>
</dbReference>
<dbReference type="CDD" id="cd05213">
    <property type="entry name" value="NAD_bind_Glutamyl_tRNA_reduct"/>
    <property type="match status" value="1"/>
</dbReference>
<dbReference type="FunFam" id="3.30.460.30:FF:000001">
    <property type="entry name" value="Glutamyl-tRNA reductase"/>
    <property type="match status" value="1"/>
</dbReference>
<dbReference type="FunFam" id="3.40.50.720:FF:000031">
    <property type="entry name" value="Glutamyl-tRNA reductase"/>
    <property type="match status" value="1"/>
</dbReference>
<dbReference type="Gene3D" id="3.30.460.30">
    <property type="entry name" value="Glutamyl-tRNA reductase, N-terminal domain"/>
    <property type="match status" value="1"/>
</dbReference>
<dbReference type="Gene3D" id="3.40.50.720">
    <property type="entry name" value="NAD(P)-binding Rossmann-like Domain"/>
    <property type="match status" value="1"/>
</dbReference>
<dbReference type="HAMAP" id="MF_00087">
    <property type="entry name" value="Glu_tRNA_reductase"/>
    <property type="match status" value="1"/>
</dbReference>
<dbReference type="InterPro" id="IPR000343">
    <property type="entry name" value="4pyrrol_synth_GluRdtase"/>
</dbReference>
<dbReference type="InterPro" id="IPR015896">
    <property type="entry name" value="4pyrrol_synth_GluRdtase_dimer"/>
</dbReference>
<dbReference type="InterPro" id="IPR015895">
    <property type="entry name" value="4pyrrol_synth_GluRdtase_N"/>
</dbReference>
<dbReference type="InterPro" id="IPR018214">
    <property type="entry name" value="GluRdtase_CS"/>
</dbReference>
<dbReference type="InterPro" id="IPR036453">
    <property type="entry name" value="GluRdtase_dimer_dom_sf"/>
</dbReference>
<dbReference type="InterPro" id="IPR036343">
    <property type="entry name" value="GluRdtase_N_sf"/>
</dbReference>
<dbReference type="InterPro" id="IPR036291">
    <property type="entry name" value="NAD(P)-bd_dom_sf"/>
</dbReference>
<dbReference type="InterPro" id="IPR006151">
    <property type="entry name" value="Shikm_DH/Glu-tRNA_Rdtase"/>
</dbReference>
<dbReference type="NCBIfam" id="TIGR01035">
    <property type="entry name" value="hemA"/>
    <property type="match status" value="1"/>
</dbReference>
<dbReference type="PANTHER" id="PTHR43013">
    <property type="entry name" value="GLUTAMYL-TRNA REDUCTASE"/>
    <property type="match status" value="1"/>
</dbReference>
<dbReference type="PANTHER" id="PTHR43013:SF1">
    <property type="entry name" value="GLUTAMYL-TRNA REDUCTASE"/>
    <property type="match status" value="1"/>
</dbReference>
<dbReference type="Pfam" id="PF00745">
    <property type="entry name" value="GlutR_dimer"/>
    <property type="match status" value="1"/>
</dbReference>
<dbReference type="Pfam" id="PF05201">
    <property type="entry name" value="GlutR_N"/>
    <property type="match status" value="1"/>
</dbReference>
<dbReference type="Pfam" id="PF01488">
    <property type="entry name" value="Shikimate_DH"/>
    <property type="match status" value="1"/>
</dbReference>
<dbReference type="PIRSF" id="PIRSF000445">
    <property type="entry name" value="4pyrrol_synth_GluRdtase"/>
    <property type="match status" value="1"/>
</dbReference>
<dbReference type="SUPFAM" id="SSF69742">
    <property type="entry name" value="Glutamyl tRNA-reductase catalytic, N-terminal domain"/>
    <property type="match status" value="1"/>
</dbReference>
<dbReference type="SUPFAM" id="SSF69075">
    <property type="entry name" value="Glutamyl tRNA-reductase dimerization domain"/>
    <property type="match status" value="1"/>
</dbReference>
<dbReference type="SUPFAM" id="SSF51735">
    <property type="entry name" value="NAD(P)-binding Rossmann-fold domains"/>
    <property type="match status" value="1"/>
</dbReference>
<dbReference type="PROSITE" id="PS00747">
    <property type="entry name" value="GLUTR"/>
    <property type="match status" value="1"/>
</dbReference>
<name>HEM1_VESOH</name>
<reference key="1">
    <citation type="journal article" date="2007" name="Curr. Biol.">
        <title>Reduced genome of the thioautotrophic intracellular symbiont in a deep-sea clam, Calyptogena okutanii.</title>
        <authorList>
            <person name="Kuwahara H."/>
            <person name="Yoshida T."/>
            <person name="Takaki Y."/>
            <person name="Shimamura S."/>
            <person name="Nishi S."/>
            <person name="Harada M."/>
            <person name="Matsuyama K."/>
            <person name="Takishita K."/>
            <person name="Kawato M."/>
            <person name="Uematsu K."/>
            <person name="Fujiwara Y."/>
            <person name="Sato T."/>
            <person name="Kato C."/>
            <person name="Kitagawa M."/>
            <person name="Kato I."/>
            <person name="Maruyama T."/>
        </authorList>
    </citation>
    <scope>NUCLEOTIDE SEQUENCE [LARGE SCALE GENOMIC DNA]</scope>
    <source>
        <strain>HA</strain>
    </source>
</reference>
<gene>
    <name evidence="1" type="primary">hemA</name>
    <name type="ordered locus">COSY_0675</name>
</gene>
<proteinExistence type="inferred from homology"/>
<protein>
    <recommendedName>
        <fullName evidence="1">Glutamyl-tRNA reductase</fullName>
        <shortName evidence="1">GluTR</shortName>
        <ecNumber evidence="1">1.2.1.70</ecNumber>
    </recommendedName>
</protein>
<organism>
    <name type="scientific">Vesicomyosocius okutanii subsp. Calyptogena okutanii (strain HA)</name>
    <dbReference type="NCBI Taxonomy" id="412965"/>
    <lineage>
        <taxon>Bacteria</taxon>
        <taxon>Pseudomonadati</taxon>
        <taxon>Pseudomonadota</taxon>
        <taxon>Gammaproteobacteria</taxon>
        <taxon>Candidatus Pseudothioglobaceae</taxon>
        <taxon>Candidatus Vesicomyosocius</taxon>
    </lineage>
</organism>
<accession>A5CW97</accession>
<comment type="function">
    <text evidence="1">Catalyzes the NADPH-dependent reduction of glutamyl-tRNA(Glu) to glutamate 1-semialdehyde (GSA).</text>
</comment>
<comment type="catalytic activity">
    <reaction evidence="1">
        <text>(S)-4-amino-5-oxopentanoate + tRNA(Glu) + NADP(+) = L-glutamyl-tRNA(Glu) + NADPH + H(+)</text>
        <dbReference type="Rhea" id="RHEA:12344"/>
        <dbReference type="Rhea" id="RHEA-COMP:9663"/>
        <dbReference type="Rhea" id="RHEA-COMP:9680"/>
        <dbReference type="ChEBI" id="CHEBI:15378"/>
        <dbReference type="ChEBI" id="CHEBI:57501"/>
        <dbReference type="ChEBI" id="CHEBI:57783"/>
        <dbReference type="ChEBI" id="CHEBI:58349"/>
        <dbReference type="ChEBI" id="CHEBI:78442"/>
        <dbReference type="ChEBI" id="CHEBI:78520"/>
        <dbReference type="EC" id="1.2.1.70"/>
    </reaction>
</comment>
<comment type="pathway">
    <text evidence="1">Porphyrin-containing compound metabolism; protoporphyrin-IX biosynthesis; 5-aminolevulinate from L-glutamyl-tRNA(Glu): step 1/2.</text>
</comment>
<comment type="subunit">
    <text evidence="1">Homodimer.</text>
</comment>
<comment type="domain">
    <text evidence="1">Possesses an unusual extended V-shaped dimeric structure with each monomer consisting of three distinct domains arranged along a curved 'spinal' alpha-helix. The N-terminal catalytic domain specifically recognizes the glutamate moiety of the substrate. The second domain is the NADPH-binding domain, and the third C-terminal domain is responsible for dimerization.</text>
</comment>
<comment type="miscellaneous">
    <text evidence="1">During catalysis, the active site Cys acts as a nucleophile attacking the alpha-carbonyl group of tRNA-bound glutamate with the formation of a thioester intermediate between enzyme and glutamate, and the concomitant release of tRNA(Glu). The thioester intermediate is finally reduced by direct hydride transfer from NADPH, to form the product GSA.</text>
</comment>
<comment type="similarity">
    <text evidence="1">Belongs to the glutamyl-tRNA reductase family.</text>
</comment>
<evidence type="ECO:0000255" key="1">
    <source>
        <dbReference type="HAMAP-Rule" id="MF_00087"/>
    </source>
</evidence>
<keyword id="KW-0521">NADP</keyword>
<keyword id="KW-0560">Oxidoreductase</keyword>
<keyword id="KW-0627">Porphyrin biosynthesis</keyword>
<keyword id="KW-1185">Reference proteome</keyword>